<organism>
    <name type="scientific">Vigna radiata var. radiata</name>
    <name type="common">Mung bean</name>
    <name type="synonym">Phaseolus aureus</name>
    <dbReference type="NCBI Taxonomy" id="3916"/>
    <lineage>
        <taxon>Eukaryota</taxon>
        <taxon>Viridiplantae</taxon>
        <taxon>Streptophyta</taxon>
        <taxon>Embryophyta</taxon>
        <taxon>Tracheophyta</taxon>
        <taxon>Spermatophyta</taxon>
        <taxon>Magnoliopsida</taxon>
        <taxon>eudicotyledons</taxon>
        <taxon>Gunneridae</taxon>
        <taxon>Pentapetalae</taxon>
        <taxon>rosids</taxon>
        <taxon>fabids</taxon>
        <taxon>Fabales</taxon>
        <taxon>Fabaceae</taxon>
        <taxon>Papilionoideae</taxon>
        <taxon>50 kb inversion clade</taxon>
        <taxon>NPAAA clade</taxon>
        <taxon>indigoferoid/millettioid clade</taxon>
        <taxon>Phaseoleae</taxon>
        <taxon>Vigna</taxon>
    </lineage>
</organism>
<keyword id="KW-0375">Hydrogen ion transport</keyword>
<keyword id="KW-0406">Ion transport</keyword>
<keyword id="KW-0472">Membrane</keyword>
<keyword id="KW-1185">Reference proteome</keyword>
<keyword id="KW-0812">Transmembrane</keyword>
<keyword id="KW-1133">Transmembrane helix</keyword>
<keyword id="KW-0813">Transport</keyword>
<keyword id="KW-0926">Vacuole</keyword>
<dbReference type="EMBL" id="AF022926">
    <property type="protein sequence ID" value="AAC12798.1"/>
    <property type="molecule type" value="mRNA"/>
</dbReference>
<dbReference type="RefSeq" id="XP_014524322.1">
    <property type="nucleotide sequence ID" value="XM_014668836.1"/>
</dbReference>
<dbReference type="SMR" id="O22552"/>
<dbReference type="STRING" id="3916.O22552"/>
<dbReference type="GeneID" id="106780537"/>
<dbReference type="KEGG" id="vra:106780537"/>
<dbReference type="OrthoDB" id="1426097at2759"/>
<dbReference type="Proteomes" id="UP000087766">
    <property type="component" value="Unplaced"/>
</dbReference>
<dbReference type="GO" id="GO:0033179">
    <property type="term" value="C:proton-transporting V-type ATPase, V0 domain"/>
    <property type="evidence" value="ECO:0007669"/>
    <property type="project" value="InterPro"/>
</dbReference>
<dbReference type="GO" id="GO:0005774">
    <property type="term" value="C:vacuolar membrane"/>
    <property type="evidence" value="ECO:0007669"/>
    <property type="project" value="UniProtKB-SubCell"/>
</dbReference>
<dbReference type="GO" id="GO:0046961">
    <property type="term" value="F:proton-transporting ATPase activity, rotational mechanism"/>
    <property type="evidence" value="ECO:0007669"/>
    <property type="project" value="InterPro"/>
</dbReference>
<dbReference type="CDD" id="cd18175">
    <property type="entry name" value="ATP-synt_Vo_c_ATP6C_rpt1"/>
    <property type="match status" value="1"/>
</dbReference>
<dbReference type="CDD" id="cd18176">
    <property type="entry name" value="ATP-synt_Vo_c_ATP6C_rpt2"/>
    <property type="match status" value="1"/>
</dbReference>
<dbReference type="FunFam" id="1.20.120.610:FF:000003">
    <property type="entry name" value="V-type proton ATPase proteolipid subunit"/>
    <property type="match status" value="1"/>
</dbReference>
<dbReference type="Gene3D" id="1.20.120.610">
    <property type="entry name" value="lithium bound rotor ring of v- atpase"/>
    <property type="match status" value="1"/>
</dbReference>
<dbReference type="InterPro" id="IPR002379">
    <property type="entry name" value="ATPase_proteolipid_c-like_dom"/>
</dbReference>
<dbReference type="InterPro" id="IPR000245">
    <property type="entry name" value="ATPase_proteolipid_csu"/>
</dbReference>
<dbReference type="InterPro" id="IPR011555">
    <property type="entry name" value="ATPase_proteolipid_su_C_euk"/>
</dbReference>
<dbReference type="InterPro" id="IPR035921">
    <property type="entry name" value="F/V-ATP_Csub_sf"/>
</dbReference>
<dbReference type="NCBIfam" id="TIGR01100">
    <property type="entry name" value="V_ATP_synt_C"/>
    <property type="match status" value="1"/>
</dbReference>
<dbReference type="PANTHER" id="PTHR10263">
    <property type="entry name" value="V-TYPE PROTON ATPASE PROTEOLIPID SUBUNIT"/>
    <property type="match status" value="1"/>
</dbReference>
<dbReference type="Pfam" id="PF00137">
    <property type="entry name" value="ATP-synt_C"/>
    <property type="match status" value="2"/>
</dbReference>
<dbReference type="PRINTS" id="PR00122">
    <property type="entry name" value="VACATPASE"/>
</dbReference>
<dbReference type="SUPFAM" id="SSF81333">
    <property type="entry name" value="F1F0 ATP synthase subunit C"/>
    <property type="match status" value="2"/>
</dbReference>
<comment type="function">
    <text>Proton-conducting pore forming subunit of the membrane integral V0 complex of vacuolar ATPase. V-ATPase is responsible for acidifying a variety of intracellular compartments in eukaryotic cells.</text>
</comment>
<comment type="subunit">
    <text>V-ATPase is a heteromultimeric enzyme composed of a peripheral catalytic V1 complex (main components: subunits A, B, C, D, E, and F) attached to an integral membrane V0 proton pore complex (main component: the proteolipid protein; which is present as a hexamer that forms the proton-conducting pore).</text>
</comment>
<comment type="subcellular location">
    <subcellularLocation>
        <location>Vacuole membrane</location>
        <topology>Multi-pass membrane protein</topology>
    </subcellularLocation>
    <text>Tonoplast.</text>
</comment>
<comment type="similarity">
    <text evidence="3">Belongs to the V-ATPase proteolipid subunit family.</text>
</comment>
<protein>
    <recommendedName>
        <fullName>V-type proton ATPase 16 kDa proteolipid subunit</fullName>
        <shortName>V-ATPase 16 kDa proteolipid subunit</shortName>
    </recommendedName>
    <alternativeName>
        <fullName>Vacuolar proton pump 16 kDa proteolipid subunit</fullName>
    </alternativeName>
</protein>
<name>VATL_VIGRR</name>
<feature type="chain" id="PRO_0000071774" description="V-type proton ATPase 16 kDa proteolipid subunit">
    <location>
        <begin position="1"/>
        <end position="164"/>
    </location>
</feature>
<feature type="topological domain" description="Lumenal" evidence="2">
    <location>
        <begin position="1"/>
        <end position="9"/>
    </location>
</feature>
<feature type="transmembrane region" description="Helical" evidence="2">
    <location>
        <begin position="10"/>
        <end position="32"/>
    </location>
</feature>
<feature type="topological domain" description="Cytoplasmic" evidence="2">
    <location>
        <begin position="33"/>
        <end position="54"/>
    </location>
</feature>
<feature type="transmembrane region" description="Helical" evidence="2">
    <location>
        <begin position="55"/>
        <end position="75"/>
    </location>
</feature>
<feature type="topological domain" description="Lumenal" evidence="2">
    <location>
        <begin position="76"/>
        <end position="94"/>
    </location>
</feature>
<feature type="transmembrane region" description="Helical" evidence="2">
    <location>
        <begin position="95"/>
        <end position="116"/>
    </location>
</feature>
<feature type="topological domain" description="Cytoplasmic" evidence="2">
    <location>
        <begin position="117"/>
        <end position="128"/>
    </location>
</feature>
<feature type="transmembrane region" description="Helical" evidence="2">
    <location>
        <begin position="129"/>
        <end position="154"/>
    </location>
</feature>
<feature type="topological domain" description="Lumenal" evidence="2">
    <location>
        <begin position="155"/>
        <end position="164"/>
    </location>
</feature>
<feature type="site" description="Essential for proton translocation" evidence="1">
    <location>
        <position position="141"/>
    </location>
</feature>
<reference key="1">
    <citation type="submission" date="1997-10" db="EMBL/GenBank/DDBJ databases">
        <authorList>
            <person name="Hung S."/>
            <person name="Pan R."/>
        </authorList>
    </citation>
    <scope>NUCLEOTIDE SEQUENCE [MRNA]</scope>
    <source>
        <tissue>Hypocotyl</tissue>
    </source>
</reference>
<sequence>MASFSGDETAPFFGFLGAAAALVFSCMGAAYGTAKSGVGVASMGVMRPELVMKSIVPVVMAGVLGIYGLIIAVIISTGINPKAKSYYLFDGYAHLSSGLACGLAGLSAGMAIGIVGDAGVRANAQQPKLFVGMILILIFAEALALYGLIVGIILSSRAGQSRAD</sequence>
<accession>O22552</accession>
<proteinExistence type="evidence at transcript level"/>
<evidence type="ECO:0000250" key="1"/>
<evidence type="ECO:0000255" key="2"/>
<evidence type="ECO:0000305" key="3"/>